<protein>
    <recommendedName>
        <fullName evidence="1">Thiamine-phosphate synthase</fullName>
        <shortName evidence="1">TP synthase</shortName>
        <shortName evidence="1">TPS</shortName>
        <ecNumber evidence="1">2.5.1.3</ecNumber>
    </recommendedName>
    <alternativeName>
        <fullName evidence="1">Thiamine-phosphate pyrophosphorylase</fullName>
        <shortName evidence="1">TMP pyrophosphorylase</shortName>
        <shortName evidence="1">TMP-PPase</shortName>
    </alternativeName>
</protein>
<sequence>MYQPDFPPVPFRLGLYPVVDSVQWIERLLDAGVRTLQLRIKDRRDEEVEADVVAAIALGRRYNARLFINDYWRLAIKHQAYGVHLGQEDLQATDLNAIRAAGLRLGVSTHDDMEIDVALAARPSYIALGHVFPTQTKQMPSAPQGLEQLARHVERLADYPTVAIGGISLARAPAVIATGVGSIAVVSAITQAADWRLATAQLLEIAGVGDE</sequence>
<accession>B2TWI0</accession>
<name>THIE_SHIB3</name>
<organism>
    <name type="scientific">Shigella boydii serotype 18 (strain CDC 3083-94 / BS512)</name>
    <dbReference type="NCBI Taxonomy" id="344609"/>
    <lineage>
        <taxon>Bacteria</taxon>
        <taxon>Pseudomonadati</taxon>
        <taxon>Pseudomonadota</taxon>
        <taxon>Gammaproteobacteria</taxon>
        <taxon>Enterobacterales</taxon>
        <taxon>Enterobacteriaceae</taxon>
        <taxon>Shigella</taxon>
    </lineage>
</organism>
<feature type="chain" id="PRO_1000093691" description="Thiamine-phosphate synthase">
    <location>
        <begin position="1"/>
        <end position="211"/>
    </location>
</feature>
<feature type="binding site" evidence="1">
    <location>
        <begin position="37"/>
        <end position="41"/>
    </location>
    <ligand>
        <name>4-amino-2-methyl-5-(diphosphooxymethyl)pyrimidine</name>
        <dbReference type="ChEBI" id="CHEBI:57841"/>
    </ligand>
</feature>
<feature type="binding site" evidence="1">
    <location>
        <position position="69"/>
    </location>
    <ligand>
        <name>4-amino-2-methyl-5-(diphosphooxymethyl)pyrimidine</name>
        <dbReference type="ChEBI" id="CHEBI:57841"/>
    </ligand>
</feature>
<feature type="binding site" evidence="1">
    <location>
        <position position="70"/>
    </location>
    <ligand>
        <name>Mg(2+)</name>
        <dbReference type="ChEBI" id="CHEBI:18420"/>
    </ligand>
</feature>
<feature type="binding site" evidence="1">
    <location>
        <position position="89"/>
    </location>
    <ligand>
        <name>Mg(2+)</name>
        <dbReference type="ChEBI" id="CHEBI:18420"/>
    </ligand>
</feature>
<feature type="binding site" evidence="1">
    <location>
        <position position="108"/>
    </location>
    <ligand>
        <name>4-amino-2-methyl-5-(diphosphooxymethyl)pyrimidine</name>
        <dbReference type="ChEBI" id="CHEBI:57841"/>
    </ligand>
</feature>
<feature type="binding site" evidence="1">
    <location>
        <begin position="134"/>
        <end position="136"/>
    </location>
    <ligand>
        <name>2-[(2R,5Z)-2-carboxy-4-methylthiazol-5(2H)-ylidene]ethyl phosphate</name>
        <dbReference type="ChEBI" id="CHEBI:62899"/>
    </ligand>
</feature>
<feature type="binding site" evidence="1">
    <location>
        <position position="137"/>
    </location>
    <ligand>
        <name>4-amino-2-methyl-5-(diphosphooxymethyl)pyrimidine</name>
        <dbReference type="ChEBI" id="CHEBI:57841"/>
    </ligand>
</feature>
<feature type="binding site" evidence="1">
    <location>
        <position position="166"/>
    </location>
    <ligand>
        <name>2-[(2R,5Z)-2-carboxy-4-methylthiazol-5(2H)-ylidene]ethyl phosphate</name>
        <dbReference type="ChEBI" id="CHEBI:62899"/>
    </ligand>
</feature>
<feature type="binding site" evidence="1">
    <location>
        <begin position="186"/>
        <end position="187"/>
    </location>
    <ligand>
        <name>2-[(2R,5Z)-2-carboxy-4-methylthiazol-5(2H)-ylidene]ethyl phosphate</name>
        <dbReference type="ChEBI" id="CHEBI:62899"/>
    </ligand>
</feature>
<keyword id="KW-0460">Magnesium</keyword>
<keyword id="KW-0479">Metal-binding</keyword>
<keyword id="KW-1185">Reference proteome</keyword>
<keyword id="KW-0784">Thiamine biosynthesis</keyword>
<keyword id="KW-0808">Transferase</keyword>
<dbReference type="EC" id="2.5.1.3" evidence="1"/>
<dbReference type="EMBL" id="CP001063">
    <property type="protein sequence ID" value="ACD07041.1"/>
    <property type="molecule type" value="Genomic_DNA"/>
</dbReference>
<dbReference type="RefSeq" id="WP_000284600.1">
    <property type="nucleotide sequence ID" value="NC_010658.1"/>
</dbReference>
<dbReference type="SMR" id="B2TWI0"/>
<dbReference type="STRING" id="344609.SbBS512_E4484"/>
<dbReference type="KEGG" id="sbc:SbBS512_E4484"/>
<dbReference type="HOGENOM" id="CLU_018272_3_3_6"/>
<dbReference type="UniPathway" id="UPA00060">
    <property type="reaction ID" value="UER00141"/>
</dbReference>
<dbReference type="Proteomes" id="UP000001030">
    <property type="component" value="Chromosome"/>
</dbReference>
<dbReference type="GO" id="GO:0005737">
    <property type="term" value="C:cytoplasm"/>
    <property type="evidence" value="ECO:0007669"/>
    <property type="project" value="TreeGrafter"/>
</dbReference>
<dbReference type="GO" id="GO:0000287">
    <property type="term" value="F:magnesium ion binding"/>
    <property type="evidence" value="ECO:0007669"/>
    <property type="project" value="UniProtKB-UniRule"/>
</dbReference>
<dbReference type="GO" id="GO:0004789">
    <property type="term" value="F:thiamine-phosphate diphosphorylase activity"/>
    <property type="evidence" value="ECO:0007669"/>
    <property type="project" value="UniProtKB-UniRule"/>
</dbReference>
<dbReference type="GO" id="GO:0009228">
    <property type="term" value="P:thiamine biosynthetic process"/>
    <property type="evidence" value="ECO:0007669"/>
    <property type="project" value="UniProtKB-KW"/>
</dbReference>
<dbReference type="GO" id="GO:0009229">
    <property type="term" value="P:thiamine diphosphate biosynthetic process"/>
    <property type="evidence" value="ECO:0007669"/>
    <property type="project" value="UniProtKB-UniRule"/>
</dbReference>
<dbReference type="CDD" id="cd00564">
    <property type="entry name" value="TMP_TenI"/>
    <property type="match status" value="1"/>
</dbReference>
<dbReference type="FunFam" id="3.20.20.70:FF:000064">
    <property type="entry name" value="Thiamine-phosphate synthase"/>
    <property type="match status" value="1"/>
</dbReference>
<dbReference type="Gene3D" id="3.20.20.70">
    <property type="entry name" value="Aldolase class I"/>
    <property type="match status" value="1"/>
</dbReference>
<dbReference type="HAMAP" id="MF_00097">
    <property type="entry name" value="TMP_synthase"/>
    <property type="match status" value="1"/>
</dbReference>
<dbReference type="InterPro" id="IPR013785">
    <property type="entry name" value="Aldolase_TIM"/>
</dbReference>
<dbReference type="InterPro" id="IPR036206">
    <property type="entry name" value="ThiamineP_synth_sf"/>
</dbReference>
<dbReference type="InterPro" id="IPR022998">
    <property type="entry name" value="ThiamineP_synth_TenI"/>
</dbReference>
<dbReference type="InterPro" id="IPR034291">
    <property type="entry name" value="TMP_synthase"/>
</dbReference>
<dbReference type="NCBIfam" id="NF002904">
    <property type="entry name" value="PRK03512.1"/>
    <property type="match status" value="1"/>
</dbReference>
<dbReference type="NCBIfam" id="TIGR00693">
    <property type="entry name" value="thiE"/>
    <property type="match status" value="1"/>
</dbReference>
<dbReference type="PANTHER" id="PTHR20857">
    <property type="entry name" value="THIAMINE-PHOSPHATE PYROPHOSPHORYLASE"/>
    <property type="match status" value="1"/>
</dbReference>
<dbReference type="PANTHER" id="PTHR20857:SF15">
    <property type="entry name" value="THIAMINE-PHOSPHATE SYNTHASE"/>
    <property type="match status" value="1"/>
</dbReference>
<dbReference type="Pfam" id="PF02581">
    <property type="entry name" value="TMP-TENI"/>
    <property type="match status" value="1"/>
</dbReference>
<dbReference type="SUPFAM" id="SSF51391">
    <property type="entry name" value="Thiamin phosphate synthase"/>
    <property type="match status" value="1"/>
</dbReference>
<reference key="1">
    <citation type="submission" date="2008-05" db="EMBL/GenBank/DDBJ databases">
        <title>Complete sequence of Shigella boydii serotype 18 strain BS512.</title>
        <authorList>
            <person name="Rasko D.A."/>
            <person name="Rosovitz M."/>
            <person name="Maurelli A.T."/>
            <person name="Myers G."/>
            <person name="Seshadri R."/>
            <person name="Cer R."/>
            <person name="Jiang L."/>
            <person name="Ravel J."/>
            <person name="Sebastian Y."/>
        </authorList>
    </citation>
    <scope>NUCLEOTIDE SEQUENCE [LARGE SCALE GENOMIC DNA]</scope>
    <source>
        <strain>CDC 3083-94 / BS512</strain>
    </source>
</reference>
<evidence type="ECO:0000255" key="1">
    <source>
        <dbReference type="HAMAP-Rule" id="MF_00097"/>
    </source>
</evidence>
<comment type="function">
    <text evidence="1">Condenses 4-methyl-5-(beta-hydroxyethyl)thiazole monophosphate (THZ-P) and 2-methyl-4-amino-5-hydroxymethyl pyrimidine pyrophosphate (HMP-PP) to form thiamine monophosphate (TMP).</text>
</comment>
<comment type="catalytic activity">
    <reaction evidence="1">
        <text>2-[(2R,5Z)-2-carboxy-4-methylthiazol-5(2H)-ylidene]ethyl phosphate + 4-amino-2-methyl-5-(diphosphooxymethyl)pyrimidine + 2 H(+) = thiamine phosphate + CO2 + diphosphate</text>
        <dbReference type="Rhea" id="RHEA:47844"/>
        <dbReference type="ChEBI" id="CHEBI:15378"/>
        <dbReference type="ChEBI" id="CHEBI:16526"/>
        <dbReference type="ChEBI" id="CHEBI:33019"/>
        <dbReference type="ChEBI" id="CHEBI:37575"/>
        <dbReference type="ChEBI" id="CHEBI:57841"/>
        <dbReference type="ChEBI" id="CHEBI:62899"/>
        <dbReference type="EC" id="2.5.1.3"/>
    </reaction>
</comment>
<comment type="catalytic activity">
    <reaction evidence="1">
        <text>2-(2-carboxy-4-methylthiazol-5-yl)ethyl phosphate + 4-amino-2-methyl-5-(diphosphooxymethyl)pyrimidine + 2 H(+) = thiamine phosphate + CO2 + diphosphate</text>
        <dbReference type="Rhea" id="RHEA:47848"/>
        <dbReference type="ChEBI" id="CHEBI:15378"/>
        <dbReference type="ChEBI" id="CHEBI:16526"/>
        <dbReference type="ChEBI" id="CHEBI:33019"/>
        <dbReference type="ChEBI" id="CHEBI:37575"/>
        <dbReference type="ChEBI" id="CHEBI:57841"/>
        <dbReference type="ChEBI" id="CHEBI:62890"/>
        <dbReference type="EC" id="2.5.1.3"/>
    </reaction>
</comment>
<comment type="catalytic activity">
    <reaction evidence="1">
        <text>4-methyl-5-(2-phosphooxyethyl)-thiazole + 4-amino-2-methyl-5-(diphosphooxymethyl)pyrimidine + H(+) = thiamine phosphate + diphosphate</text>
        <dbReference type="Rhea" id="RHEA:22328"/>
        <dbReference type="ChEBI" id="CHEBI:15378"/>
        <dbReference type="ChEBI" id="CHEBI:33019"/>
        <dbReference type="ChEBI" id="CHEBI:37575"/>
        <dbReference type="ChEBI" id="CHEBI:57841"/>
        <dbReference type="ChEBI" id="CHEBI:58296"/>
        <dbReference type="EC" id="2.5.1.3"/>
    </reaction>
</comment>
<comment type="cofactor">
    <cofactor evidence="1">
        <name>Mg(2+)</name>
        <dbReference type="ChEBI" id="CHEBI:18420"/>
    </cofactor>
    <text evidence="1">Binds 1 Mg(2+) ion per subunit.</text>
</comment>
<comment type="pathway">
    <text evidence="1">Cofactor biosynthesis; thiamine diphosphate biosynthesis; thiamine phosphate from 4-amino-2-methyl-5-diphosphomethylpyrimidine and 4-methyl-5-(2-phosphoethyl)-thiazole: step 1/1.</text>
</comment>
<comment type="similarity">
    <text evidence="1">Belongs to the thiamine-phosphate synthase family.</text>
</comment>
<proteinExistence type="inferred from homology"/>
<gene>
    <name evidence="1" type="primary">thiE</name>
    <name type="ordered locus">SbBS512_E4484</name>
</gene>